<sequence>MTETTARSIPLQIVQGDSPSAAPLQAGVKQLGGDKINRSPVQFADAPVLRKPSWIRVRIPSGNAVQNLKAKLRENRLVTVCEEASCPNIHECFGHGTATFMILGEVCTRRCSFCDVAHGRPKPPDANEPASLGQTVADMGLKYVVVTSVDRDDLRDGGAQHFVDCITAIREKSPGTRIEVLTPDFRGKGRMERALEILAQNPPDVFNHNIETVPDLYRNVRPGADYQWSLNLLKNFKAQHPDVPTKSGIMLGLGEDFEQIKATLRDLRAHDVDMITIGQYLQPTAHHHPVLKYWTPEDYKALEDYGYELGFSHVASGPMVRSSYHADVQAKGAGVS</sequence>
<gene>
    <name evidence="1" type="primary">lipA</name>
    <name type="ordered locus">Smlt4046</name>
</gene>
<organism>
    <name type="scientific">Stenotrophomonas maltophilia (strain K279a)</name>
    <dbReference type="NCBI Taxonomy" id="522373"/>
    <lineage>
        <taxon>Bacteria</taxon>
        <taxon>Pseudomonadati</taxon>
        <taxon>Pseudomonadota</taxon>
        <taxon>Gammaproteobacteria</taxon>
        <taxon>Lysobacterales</taxon>
        <taxon>Lysobacteraceae</taxon>
        <taxon>Stenotrophomonas</taxon>
        <taxon>Stenotrophomonas maltophilia group</taxon>
    </lineage>
</organism>
<keyword id="KW-0004">4Fe-4S</keyword>
<keyword id="KW-0963">Cytoplasm</keyword>
<keyword id="KW-0408">Iron</keyword>
<keyword id="KW-0411">Iron-sulfur</keyword>
<keyword id="KW-0479">Metal-binding</keyword>
<keyword id="KW-1185">Reference proteome</keyword>
<keyword id="KW-0949">S-adenosyl-L-methionine</keyword>
<keyword id="KW-0808">Transferase</keyword>
<protein>
    <recommendedName>
        <fullName evidence="1">Lipoyl synthase</fullName>
        <ecNumber evidence="1">2.8.1.8</ecNumber>
    </recommendedName>
    <alternativeName>
        <fullName evidence="1">Lip-syn</fullName>
        <shortName evidence="1">LS</shortName>
    </alternativeName>
    <alternativeName>
        <fullName evidence="1">Lipoate synthase</fullName>
    </alternativeName>
    <alternativeName>
        <fullName evidence="1">Lipoic acid synthase</fullName>
    </alternativeName>
    <alternativeName>
        <fullName evidence="1">Sulfur insertion protein LipA</fullName>
    </alternativeName>
</protein>
<dbReference type="EC" id="2.8.1.8" evidence="1"/>
<dbReference type="EMBL" id="AM743169">
    <property type="protein sequence ID" value="CAQ47438.1"/>
    <property type="molecule type" value="Genomic_DNA"/>
</dbReference>
<dbReference type="RefSeq" id="WP_005411065.1">
    <property type="nucleotide sequence ID" value="NC_010943.1"/>
</dbReference>
<dbReference type="SMR" id="B2FUS8"/>
<dbReference type="EnsemblBacteria" id="CAQ47438">
    <property type="protein sequence ID" value="CAQ47438"/>
    <property type="gene ID" value="Smlt4046"/>
</dbReference>
<dbReference type="GeneID" id="93835013"/>
<dbReference type="KEGG" id="sml:Smlt4046"/>
<dbReference type="eggNOG" id="COG0320">
    <property type="taxonomic scope" value="Bacteria"/>
</dbReference>
<dbReference type="HOGENOM" id="CLU_033144_2_1_6"/>
<dbReference type="UniPathway" id="UPA00538">
    <property type="reaction ID" value="UER00593"/>
</dbReference>
<dbReference type="Proteomes" id="UP000008840">
    <property type="component" value="Chromosome"/>
</dbReference>
<dbReference type="GO" id="GO:0005737">
    <property type="term" value="C:cytoplasm"/>
    <property type="evidence" value="ECO:0007669"/>
    <property type="project" value="UniProtKB-SubCell"/>
</dbReference>
<dbReference type="GO" id="GO:0051539">
    <property type="term" value="F:4 iron, 4 sulfur cluster binding"/>
    <property type="evidence" value="ECO:0007669"/>
    <property type="project" value="UniProtKB-UniRule"/>
</dbReference>
<dbReference type="GO" id="GO:0016992">
    <property type="term" value="F:lipoate synthase activity"/>
    <property type="evidence" value="ECO:0007669"/>
    <property type="project" value="UniProtKB-UniRule"/>
</dbReference>
<dbReference type="GO" id="GO:0046872">
    <property type="term" value="F:metal ion binding"/>
    <property type="evidence" value="ECO:0007669"/>
    <property type="project" value="UniProtKB-KW"/>
</dbReference>
<dbReference type="CDD" id="cd01335">
    <property type="entry name" value="Radical_SAM"/>
    <property type="match status" value="1"/>
</dbReference>
<dbReference type="FunFam" id="3.20.20.70:FF:000023">
    <property type="entry name" value="Lipoyl synthase"/>
    <property type="match status" value="1"/>
</dbReference>
<dbReference type="Gene3D" id="3.20.20.70">
    <property type="entry name" value="Aldolase class I"/>
    <property type="match status" value="1"/>
</dbReference>
<dbReference type="HAMAP" id="MF_00206">
    <property type="entry name" value="Lipoyl_synth"/>
    <property type="match status" value="1"/>
</dbReference>
<dbReference type="InterPro" id="IPR013785">
    <property type="entry name" value="Aldolase_TIM"/>
</dbReference>
<dbReference type="InterPro" id="IPR006638">
    <property type="entry name" value="Elp3/MiaA/NifB-like_rSAM"/>
</dbReference>
<dbReference type="InterPro" id="IPR031691">
    <property type="entry name" value="LIAS_N"/>
</dbReference>
<dbReference type="InterPro" id="IPR003698">
    <property type="entry name" value="Lipoyl_synth"/>
</dbReference>
<dbReference type="InterPro" id="IPR007197">
    <property type="entry name" value="rSAM"/>
</dbReference>
<dbReference type="NCBIfam" id="TIGR00510">
    <property type="entry name" value="lipA"/>
    <property type="match status" value="1"/>
</dbReference>
<dbReference type="NCBIfam" id="NF004019">
    <property type="entry name" value="PRK05481.1"/>
    <property type="match status" value="1"/>
</dbReference>
<dbReference type="NCBIfam" id="NF009544">
    <property type="entry name" value="PRK12928.1"/>
    <property type="match status" value="1"/>
</dbReference>
<dbReference type="PANTHER" id="PTHR10949">
    <property type="entry name" value="LIPOYL SYNTHASE"/>
    <property type="match status" value="1"/>
</dbReference>
<dbReference type="PANTHER" id="PTHR10949:SF0">
    <property type="entry name" value="LIPOYL SYNTHASE, MITOCHONDRIAL"/>
    <property type="match status" value="1"/>
</dbReference>
<dbReference type="Pfam" id="PF16881">
    <property type="entry name" value="LIAS_N"/>
    <property type="match status" value="1"/>
</dbReference>
<dbReference type="Pfam" id="PF04055">
    <property type="entry name" value="Radical_SAM"/>
    <property type="match status" value="1"/>
</dbReference>
<dbReference type="PIRSF" id="PIRSF005963">
    <property type="entry name" value="Lipoyl_synth"/>
    <property type="match status" value="1"/>
</dbReference>
<dbReference type="SFLD" id="SFLDF00271">
    <property type="entry name" value="lipoyl_synthase"/>
    <property type="match status" value="1"/>
</dbReference>
<dbReference type="SFLD" id="SFLDG01058">
    <property type="entry name" value="lipoyl_synthase_like"/>
    <property type="match status" value="1"/>
</dbReference>
<dbReference type="SMART" id="SM00729">
    <property type="entry name" value="Elp3"/>
    <property type="match status" value="1"/>
</dbReference>
<dbReference type="SUPFAM" id="SSF102114">
    <property type="entry name" value="Radical SAM enzymes"/>
    <property type="match status" value="1"/>
</dbReference>
<dbReference type="PROSITE" id="PS51918">
    <property type="entry name" value="RADICAL_SAM"/>
    <property type="match status" value="1"/>
</dbReference>
<evidence type="ECO:0000255" key="1">
    <source>
        <dbReference type="HAMAP-Rule" id="MF_00206"/>
    </source>
</evidence>
<evidence type="ECO:0000255" key="2">
    <source>
        <dbReference type="PROSITE-ProRule" id="PRU01266"/>
    </source>
</evidence>
<name>LIPA_STRMK</name>
<proteinExistence type="inferred from homology"/>
<feature type="chain" id="PRO_1000099639" description="Lipoyl synthase">
    <location>
        <begin position="1"/>
        <end position="336"/>
    </location>
</feature>
<feature type="domain" description="Radical SAM core" evidence="2">
    <location>
        <begin position="93"/>
        <end position="312"/>
    </location>
</feature>
<feature type="binding site" evidence="1">
    <location>
        <position position="81"/>
    </location>
    <ligand>
        <name>[4Fe-4S] cluster</name>
        <dbReference type="ChEBI" id="CHEBI:49883"/>
        <label>1</label>
    </ligand>
</feature>
<feature type="binding site" evidence="1">
    <location>
        <position position="86"/>
    </location>
    <ligand>
        <name>[4Fe-4S] cluster</name>
        <dbReference type="ChEBI" id="CHEBI:49883"/>
        <label>1</label>
    </ligand>
</feature>
<feature type="binding site" evidence="1">
    <location>
        <position position="92"/>
    </location>
    <ligand>
        <name>[4Fe-4S] cluster</name>
        <dbReference type="ChEBI" id="CHEBI:49883"/>
        <label>1</label>
    </ligand>
</feature>
<feature type="binding site" evidence="1">
    <location>
        <position position="107"/>
    </location>
    <ligand>
        <name>[4Fe-4S] cluster</name>
        <dbReference type="ChEBI" id="CHEBI:49883"/>
        <label>2</label>
        <note>4Fe-4S-S-AdoMet</note>
    </ligand>
</feature>
<feature type="binding site" evidence="1">
    <location>
        <position position="111"/>
    </location>
    <ligand>
        <name>[4Fe-4S] cluster</name>
        <dbReference type="ChEBI" id="CHEBI:49883"/>
        <label>2</label>
        <note>4Fe-4S-S-AdoMet</note>
    </ligand>
</feature>
<feature type="binding site" evidence="1">
    <location>
        <position position="114"/>
    </location>
    <ligand>
        <name>[4Fe-4S] cluster</name>
        <dbReference type="ChEBI" id="CHEBI:49883"/>
        <label>2</label>
        <note>4Fe-4S-S-AdoMet</note>
    </ligand>
</feature>
<feature type="binding site" evidence="1">
    <location>
        <position position="323"/>
    </location>
    <ligand>
        <name>[4Fe-4S] cluster</name>
        <dbReference type="ChEBI" id="CHEBI:49883"/>
        <label>1</label>
    </ligand>
</feature>
<comment type="function">
    <text evidence="1">Catalyzes the radical-mediated insertion of two sulfur atoms into the C-6 and C-8 positions of the octanoyl moiety bound to the lipoyl domains of lipoate-dependent enzymes, thereby converting the octanoylated domains into lipoylated derivatives.</text>
</comment>
<comment type="catalytic activity">
    <reaction evidence="1">
        <text>[[Fe-S] cluster scaffold protein carrying a second [4Fe-4S](2+) cluster] + N(6)-octanoyl-L-lysyl-[protein] + 2 oxidized [2Fe-2S]-[ferredoxin] + 2 S-adenosyl-L-methionine + 4 H(+) = [[Fe-S] cluster scaffold protein] + N(6)-[(R)-dihydrolipoyl]-L-lysyl-[protein] + 4 Fe(3+) + 2 hydrogen sulfide + 2 5'-deoxyadenosine + 2 L-methionine + 2 reduced [2Fe-2S]-[ferredoxin]</text>
        <dbReference type="Rhea" id="RHEA:16585"/>
        <dbReference type="Rhea" id="RHEA-COMP:9928"/>
        <dbReference type="Rhea" id="RHEA-COMP:10000"/>
        <dbReference type="Rhea" id="RHEA-COMP:10001"/>
        <dbReference type="Rhea" id="RHEA-COMP:10475"/>
        <dbReference type="Rhea" id="RHEA-COMP:14568"/>
        <dbReference type="Rhea" id="RHEA-COMP:14569"/>
        <dbReference type="ChEBI" id="CHEBI:15378"/>
        <dbReference type="ChEBI" id="CHEBI:17319"/>
        <dbReference type="ChEBI" id="CHEBI:29034"/>
        <dbReference type="ChEBI" id="CHEBI:29919"/>
        <dbReference type="ChEBI" id="CHEBI:33722"/>
        <dbReference type="ChEBI" id="CHEBI:33737"/>
        <dbReference type="ChEBI" id="CHEBI:33738"/>
        <dbReference type="ChEBI" id="CHEBI:57844"/>
        <dbReference type="ChEBI" id="CHEBI:59789"/>
        <dbReference type="ChEBI" id="CHEBI:78809"/>
        <dbReference type="ChEBI" id="CHEBI:83100"/>
        <dbReference type="EC" id="2.8.1.8"/>
    </reaction>
</comment>
<comment type="cofactor">
    <cofactor evidence="1">
        <name>[4Fe-4S] cluster</name>
        <dbReference type="ChEBI" id="CHEBI:49883"/>
    </cofactor>
    <text evidence="1">Binds 2 [4Fe-4S] clusters per subunit. One cluster is coordinated with 3 cysteines and an exchangeable S-adenosyl-L-methionine.</text>
</comment>
<comment type="pathway">
    <text evidence="1">Protein modification; protein lipoylation via endogenous pathway; protein N(6)-(lipoyl)lysine from octanoyl-[acyl-carrier-protein]: step 2/2.</text>
</comment>
<comment type="subcellular location">
    <subcellularLocation>
        <location evidence="1">Cytoplasm</location>
    </subcellularLocation>
</comment>
<comment type="similarity">
    <text evidence="1">Belongs to the radical SAM superfamily. Lipoyl synthase family.</text>
</comment>
<accession>B2FUS8</accession>
<reference key="1">
    <citation type="journal article" date="2008" name="Genome Biol.">
        <title>The complete genome, comparative and functional analysis of Stenotrophomonas maltophilia reveals an organism heavily shielded by drug resistance determinants.</title>
        <authorList>
            <person name="Crossman L.C."/>
            <person name="Gould V.C."/>
            <person name="Dow J.M."/>
            <person name="Vernikos G.S."/>
            <person name="Okazaki A."/>
            <person name="Sebaihia M."/>
            <person name="Saunders D."/>
            <person name="Arrowsmith C."/>
            <person name="Carver T."/>
            <person name="Peters N."/>
            <person name="Adlem E."/>
            <person name="Kerhornou A."/>
            <person name="Lord A."/>
            <person name="Murphy L."/>
            <person name="Seeger K."/>
            <person name="Squares R."/>
            <person name="Rutter S."/>
            <person name="Quail M.A."/>
            <person name="Rajandream M.A."/>
            <person name="Harris D."/>
            <person name="Churcher C."/>
            <person name="Bentley S.D."/>
            <person name="Parkhill J."/>
            <person name="Thomson N.R."/>
            <person name="Avison M.B."/>
        </authorList>
    </citation>
    <scope>NUCLEOTIDE SEQUENCE [LARGE SCALE GENOMIC DNA]</scope>
    <source>
        <strain>K279a</strain>
    </source>
</reference>